<dbReference type="EMBL" id="M15240">
    <property type="protein sequence ID" value="AAA88529.1"/>
    <property type="molecule type" value="Genomic_RNA"/>
</dbReference>
<dbReference type="EMBL" id="D00242">
    <property type="protein sequence ID" value="BAA00172.1"/>
    <property type="molecule type" value="Genomic_RNA"/>
</dbReference>
<dbReference type="EMBL" id="D00156">
    <property type="protein sequence ID" value="BAA28178.1"/>
    <property type="molecule type" value="Genomic_RNA"/>
</dbReference>
<dbReference type="PIR" id="A24309">
    <property type="entry name" value="A24309"/>
</dbReference>
<dbReference type="PIR" id="A29822">
    <property type="entry name" value="GNWVR4"/>
</dbReference>
<dbReference type="RefSeq" id="NP_062884.1">
    <property type="nucleotide sequence ID" value="NC_001545.2"/>
</dbReference>
<dbReference type="PDB" id="5KHE">
    <property type="method" value="EM"/>
    <property type="resolution" value="35.00 A"/>
    <property type="chains" value="A/B=9-277"/>
</dbReference>
<dbReference type="PDB" id="5KHF">
    <property type="method" value="EM"/>
    <property type="resolution" value="35.00 A"/>
    <property type="chains" value="A/B=9-277"/>
</dbReference>
<dbReference type="PDBsum" id="5KHE"/>
<dbReference type="PDBsum" id="5KHF"/>
<dbReference type="EMDB" id="EMD-8249"/>
<dbReference type="EMDB" id="EMD-8250"/>
<dbReference type="SMR" id="P07566"/>
<dbReference type="IntAct" id="P07566">
    <property type="interactions" value="4"/>
</dbReference>
<dbReference type="GeneID" id="1502162"/>
<dbReference type="KEGG" id="vg:1502162"/>
<dbReference type="Proteomes" id="UP000000571">
    <property type="component" value="Segment"/>
</dbReference>
<dbReference type="GO" id="GO:0044178">
    <property type="term" value="C:host cell Golgi membrane"/>
    <property type="evidence" value="ECO:0007669"/>
    <property type="project" value="UniProtKB-SubCell"/>
</dbReference>
<dbReference type="GO" id="GO:0033650">
    <property type="term" value="C:host cell mitochondrion"/>
    <property type="evidence" value="ECO:0007669"/>
    <property type="project" value="UniProtKB-SubCell"/>
</dbReference>
<dbReference type="GO" id="GO:0016020">
    <property type="term" value="C:membrane"/>
    <property type="evidence" value="ECO:0007669"/>
    <property type="project" value="UniProtKB-KW"/>
</dbReference>
<dbReference type="GO" id="GO:0039619">
    <property type="term" value="C:T=4 icosahedral viral capsid"/>
    <property type="evidence" value="ECO:0007669"/>
    <property type="project" value="UniProtKB-KW"/>
</dbReference>
<dbReference type="GO" id="GO:0019031">
    <property type="term" value="C:viral envelope"/>
    <property type="evidence" value="ECO:0007669"/>
    <property type="project" value="UniProtKB-KW"/>
</dbReference>
<dbReference type="GO" id="GO:0019013">
    <property type="term" value="C:viral nucleocapsid"/>
    <property type="evidence" value="ECO:0007669"/>
    <property type="project" value="InterPro"/>
</dbReference>
<dbReference type="GO" id="GO:0055036">
    <property type="term" value="C:virion membrane"/>
    <property type="evidence" value="ECO:0007669"/>
    <property type="project" value="UniProtKB-SubCell"/>
</dbReference>
<dbReference type="GO" id="GO:0046872">
    <property type="term" value="F:metal ion binding"/>
    <property type="evidence" value="ECO:0007669"/>
    <property type="project" value="UniProtKB-KW"/>
</dbReference>
<dbReference type="GO" id="GO:0003723">
    <property type="term" value="F:RNA binding"/>
    <property type="evidence" value="ECO:0007669"/>
    <property type="project" value="UniProtKB-KW"/>
</dbReference>
<dbReference type="GO" id="GO:0075512">
    <property type="term" value="P:clathrin-dependent endocytosis of virus by host cell"/>
    <property type="evidence" value="ECO:0007669"/>
    <property type="project" value="UniProtKB-KW"/>
</dbReference>
<dbReference type="GO" id="GO:0039654">
    <property type="term" value="P:fusion of virus membrane with host endosome membrane"/>
    <property type="evidence" value="ECO:0007669"/>
    <property type="project" value="UniProtKB-KW"/>
</dbReference>
<dbReference type="GO" id="GO:0019062">
    <property type="term" value="P:virion attachment to host cell"/>
    <property type="evidence" value="ECO:0007669"/>
    <property type="project" value="UniProtKB-KW"/>
</dbReference>
<dbReference type="Gene3D" id="2.60.98.30">
    <property type="entry name" value="Rubella membrane glycoprotein E1, domain 1"/>
    <property type="match status" value="1"/>
</dbReference>
<dbReference type="Gene3D" id="3.30.67.20">
    <property type="entry name" value="Rubella membrane glycoprotein E1, domain 2"/>
    <property type="match status" value="2"/>
</dbReference>
<dbReference type="Gene3D" id="2.60.40.2650">
    <property type="entry name" value="Rubella membrane glycoprotein E1, domain 3"/>
    <property type="match status" value="1"/>
</dbReference>
<dbReference type="Gene3D" id="3.10.50.50">
    <property type="entry name" value="Rubella virus capsid protein"/>
    <property type="match status" value="1"/>
</dbReference>
<dbReference type="InterPro" id="IPR008819">
    <property type="entry name" value="Rubella_Capsid"/>
</dbReference>
<dbReference type="InterPro" id="IPR043106">
    <property type="entry name" value="Rubella_Capsid_sf"/>
</dbReference>
<dbReference type="InterPro" id="IPR008820">
    <property type="entry name" value="Rubella_E1"/>
</dbReference>
<dbReference type="InterPro" id="IPR042500">
    <property type="entry name" value="Rubella_E1_1"/>
</dbReference>
<dbReference type="InterPro" id="IPR042498">
    <property type="entry name" value="Rubella_E1_2"/>
</dbReference>
<dbReference type="InterPro" id="IPR042499">
    <property type="entry name" value="Rubella_E1_3"/>
</dbReference>
<dbReference type="InterPro" id="IPR008821">
    <property type="entry name" value="Rubella_E2"/>
</dbReference>
<dbReference type="PANTHER" id="PTHR13037">
    <property type="entry name" value="FORMIN"/>
    <property type="match status" value="1"/>
</dbReference>
<dbReference type="PANTHER" id="PTHR13037:SF24">
    <property type="entry name" value="POLYCOMB PROTEIN PCL-RELATED"/>
    <property type="match status" value="1"/>
</dbReference>
<dbReference type="Pfam" id="PF05750">
    <property type="entry name" value="Rubella_Capsid"/>
    <property type="match status" value="1"/>
</dbReference>
<dbReference type="Pfam" id="PF05748">
    <property type="entry name" value="Rubella_E1"/>
    <property type="match status" value="1"/>
</dbReference>
<dbReference type="Pfam" id="PF05749">
    <property type="entry name" value="Rubella_E2"/>
    <property type="match status" value="1"/>
</dbReference>
<keyword id="KW-0002">3D-structure</keyword>
<keyword id="KW-0106">Calcium</keyword>
<keyword id="KW-0167">Capsid protein</keyword>
<keyword id="KW-1165">Clathrin-mediated endocytosis of virus by host</keyword>
<keyword id="KW-1015">Disulfide bond</keyword>
<keyword id="KW-1170">Fusion of virus membrane with host endosomal membrane</keyword>
<keyword id="KW-1168">Fusion of virus membrane with host membrane</keyword>
<keyword id="KW-0325">Glycoprotein</keyword>
<keyword id="KW-1035">Host cytoplasm</keyword>
<keyword id="KW-1040">Host Golgi apparatus</keyword>
<keyword id="KW-1043">Host membrane</keyword>
<keyword id="KW-1045">Host mitochondrion</keyword>
<keyword id="KW-0945">Host-virus interaction</keyword>
<keyword id="KW-0449">Lipoprotein</keyword>
<keyword id="KW-0472">Membrane</keyword>
<keyword id="KW-0479">Metal-binding</keyword>
<keyword id="KW-0564">Palmitate</keyword>
<keyword id="KW-0597">Phosphoprotein</keyword>
<keyword id="KW-1185">Reference proteome</keyword>
<keyword id="KW-0694">RNA-binding</keyword>
<keyword id="KW-1144">T=4 icosahedral capsid protein</keyword>
<keyword id="KW-0812">Transmembrane</keyword>
<keyword id="KW-1133">Transmembrane helix</keyword>
<keyword id="KW-1161">Viral attachment to host cell</keyword>
<keyword id="KW-0261">Viral envelope protein</keyword>
<keyword id="KW-1162">Viral penetration into host cytoplasm</keyword>
<keyword id="KW-0946">Virion</keyword>
<keyword id="KW-1164">Virus endocytosis by host</keyword>
<keyword id="KW-1160">Virus entry into host cell</keyword>
<accession>P07566</accession>
<reference key="1">
    <citation type="journal article" date="1990" name="Virology">
        <title>Sequence of the genome RNA of rubella virus: evidence for genetic rearrangement during togavirus evolution.</title>
        <authorList>
            <person name="Dominguez G."/>
            <person name="Wang C.Y."/>
            <person name="Frey T.K."/>
        </authorList>
    </citation>
    <scope>NUCLEOTIDE SEQUENCE [GENOMIC RNA]</scope>
</reference>
<reference key="2">
    <citation type="journal article" date="1988" name="Gene">
        <title>Sequence of the region coding for virion proteins C and E2 and the carboxy terminus of the nonstructural proteins of rubella virus: comparison with alphaviruses.</title>
        <authorList>
            <person name="Frey T.K."/>
            <person name="Marr L.D."/>
        </authorList>
    </citation>
    <scope>NUCLEOTIDE SEQUENCE [GENOMIC RNA] OF 1-621</scope>
</reference>
<reference key="3">
    <citation type="journal article" date="1986" name="Virology">
        <title>Molecular cloning and sequencing of the region of the rubella virus genome coding for glycoprotein E1.</title>
        <authorList>
            <person name="Frey T.K."/>
            <person name="Marr L.D."/>
            <person name="Hemphill M.L."/>
            <person name="Dominguez G."/>
        </authorList>
    </citation>
    <scope>NUCLEOTIDE SEQUENCE [GENOMIC RNA] OF 551-1063</scope>
</reference>
<reference key="4">
    <citation type="journal article" date="1988" name="J. Gen. Virol.">
        <title>Nucleotide sequence of the rubella virus capsid protein gene reveals an unusually high G/C content.</title>
        <authorList>
            <person name="Takkinen K."/>
            <person name="Vidgren G."/>
            <person name="Ekstrand J."/>
            <person name="Hellman U."/>
            <person name="Kalkkinen N."/>
            <person name="Wernstedt C."/>
            <person name="Pettersson R.F."/>
        </authorList>
    </citation>
    <scope>NUCLEOTIDE SEQUENCE [GENOMIC RNA] OF 1-319</scope>
</reference>
<reference key="5">
    <citation type="journal article" date="1987" name="J. Gen. Virol.">
        <title>Nucleotide sequence of the genes coding for the membrane glycoproteins E1 and E2 of rubella virus.</title>
        <authorList>
            <person name="Vidgren G."/>
            <person name="Takkinen K."/>
            <person name="Kalkkinen N."/>
            <person name="Kaeaeriaeinen L."/>
            <person name="Pettersson R.F."/>
        </authorList>
    </citation>
    <scope>NUCLEOTIDE SEQUENCE [GENOMIC RNA] OF 278-1063</scope>
</reference>
<reference key="6">
    <citation type="journal article" date="1991" name="Virology">
        <title>Oligomerization of the structural proteins of rubella virus.</title>
        <authorList>
            <person name="Baron M.D."/>
            <person name="Forsell K."/>
        </authorList>
    </citation>
    <scope>OLIGOMERIZATION</scope>
</reference>
<reference key="7">
    <citation type="journal article" date="1997" name="Virology">
        <title>Analyses of disulfides present in the rubella virus E1 glycoprotein.</title>
        <authorList>
            <person name="Gros C."/>
            <person name="Linder M."/>
            <person name="Wengler G."/>
            <person name="Wengler G."/>
        </authorList>
    </citation>
    <scope>DISULFIDE BOND</scope>
</reference>
<reference key="8">
    <citation type="journal article" date="2004" name="Microbiol. Immunol.">
        <title>Effects of endocytosis inhibitory drugs on rubella virus entry into VeroE6 cells.</title>
        <authorList>
            <person name="Kee S.H."/>
            <person name="Cho E.J."/>
            <person name="Song J.W."/>
            <person name="Park K.S."/>
            <person name="Baek L.J."/>
            <person name="Song K.J."/>
        </authorList>
    </citation>
    <scope>FUNCTION (SPIKE GLYCOPROTEIN E1)</scope>
</reference>
<name>POLS_RUBVT</name>
<proteinExistence type="evidence at protein level"/>
<feature type="chain" id="PRO_0000041308" description="Capsid protein">
    <location>
        <begin position="1"/>
        <end position="300"/>
    </location>
</feature>
<feature type="chain" id="PRO_0000041309" description="Spike glycoprotein E2">
    <location>
        <begin position="301"/>
        <end position="582"/>
    </location>
</feature>
<feature type="chain" id="PRO_0000041310" description="Spike glycoprotein E1">
    <location>
        <begin position="583"/>
        <end position="1063"/>
    </location>
</feature>
<feature type="topological domain" description="Extracellular" evidence="3">
    <location>
        <begin position="301"/>
        <end position="534"/>
    </location>
</feature>
<feature type="transmembrane region" description="Helical; Note=Golgi retention signal" evidence="2">
    <location>
        <begin position="535"/>
        <end position="555"/>
    </location>
</feature>
<feature type="topological domain" description="Cytoplasmic" evidence="3">
    <location>
        <begin position="556"/>
        <end position="582"/>
    </location>
</feature>
<feature type="topological domain" description="Extracellular" evidence="3">
    <location>
        <begin position="583"/>
        <end position="1028"/>
    </location>
</feature>
<feature type="transmembrane region" description="Helical; Note=Endoplasmic reticulum retention signal" evidence="2">
    <location>
        <begin position="1029"/>
        <end position="1049"/>
    </location>
</feature>
<feature type="topological domain" description="Extracellular" evidence="3">
    <location>
        <begin position="1050"/>
        <end position="1063"/>
    </location>
</feature>
<feature type="region of interest" description="Disordered" evidence="4">
    <location>
        <begin position="1"/>
        <end position="131"/>
    </location>
</feature>
<feature type="region of interest" description="Human C1QBP/SF2P32-binding" evidence="2">
    <location>
        <begin position="30"/>
        <end position="69"/>
    </location>
</feature>
<feature type="region of interest" description="Functions as E2 signal peptide" evidence="2">
    <location>
        <begin position="279"/>
        <end position="300"/>
    </location>
</feature>
<feature type="region of interest" description="Functions as E1 signal peptide" evidence="2">
    <location>
        <begin position="563"/>
        <end position="582"/>
    </location>
</feature>
<feature type="compositionally biased region" description="Basic residues" evidence="4">
    <location>
        <begin position="59"/>
        <end position="69"/>
    </location>
</feature>
<feature type="compositionally biased region" description="Basic and acidic residues" evidence="4">
    <location>
        <begin position="70"/>
        <end position="87"/>
    </location>
</feature>
<feature type="compositionally biased region" description="Pro residues" evidence="4">
    <location>
        <begin position="93"/>
        <end position="107"/>
    </location>
</feature>
<feature type="binding site" evidence="2">
    <location>
        <position position="670"/>
    </location>
    <ligand>
        <name>Ca(2+)</name>
        <dbReference type="ChEBI" id="CHEBI:29108"/>
    </ligand>
</feature>
<feature type="binding site" evidence="2">
    <location>
        <position position="671"/>
    </location>
    <ligand>
        <name>Ca(2+)</name>
        <dbReference type="ChEBI" id="CHEBI:29108"/>
    </ligand>
</feature>
<feature type="binding site" evidence="2">
    <location>
        <position position="718"/>
    </location>
    <ligand>
        <name>Ca(2+)</name>
        <dbReference type="ChEBI" id="CHEBI:29108"/>
    </ligand>
</feature>
<feature type="binding site" evidence="2">
    <location>
        <position position="719"/>
    </location>
    <ligand>
        <name>Ca(2+)</name>
        <dbReference type="ChEBI" id="CHEBI:29108"/>
    </ligand>
</feature>
<feature type="site" description="Cleavage; by host signal peptidase" evidence="3">
    <location>
        <begin position="300"/>
        <end position="301"/>
    </location>
</feature>
<feature type="site" description="Cleavage; by host signal peptidase" evidence="3">
    <location>
        <begin position="582"/>
        <end position="583"/>
    </location>
</feature>
<feature type="modified residue" description="Phosphoserine; by host" evidence="2">
    <location>
        <position position="46"/>
    </location>
</feature>
<feature type="glycosylation site" description="N-linked (GlcNAc...) asparagine; by host" evidence="3">
    <location>
        <position position="353"/>
    </location>
</feature>
<feature type="glycosylation site" description="N-linked (GlcNAc...) asparagine; by host" evidence="3">
    <location>
        <position position="371"/>
    </location>
</feature>
<feature type="glycosylation site" description="N-linked (GlcNAc...) asparagine; by host" evidence="3">
    <location>
        <position position="410"/>
    </location>
</feature>
<feature type="glycosylation site" description="N-linked (GlcNAc...) asparagine; by host" evidence="3">
    <location>
        <position position="429"/>
    </location>
</feature>
<feature type="glycosylation site" description="N-linked (GlcNAc...) asparagine; by host" evidence="2">
    <location>
        <position position="658"/>
    </location>
</feature>
<feature type="glycosylation site" description="N-linked (GlcNAc...) asparagine; by host" evidence="2">
    <location>
        <position position="759"/>
    </location>
</feature>
<feature type="glycosylation site" description="N-linked (GlcNAc...) asparagine; by host" evidence="2">
    <location>
        <position position="791"/>
    </location>
</feature>
<feature type="glycosylation site" description="O-linked (GalNAc...) threonine; by host" evidence="2">
    <location>
        <position position="1011"/>
    </location>
</feature>
<feature type="glycosylation site" description="O-linked (GalNAc...) threonine; by host" evidence="2">
    <location>
        <position position="1012"/>
    </location>
</feature>
<feature type="disulfide bond" evidence="2">
    <location>
        <begin position="153"/>
        <end position="197"/>
    </location>
</feature>
<feature type="disulfide bond" evidence="6">
    <location>
        <begin position="590"/>
        <end position="595"/>
    </location>
</feature>
<feature type="disulfide bond" evidence="6">
    <location>
        <begin position="619"/>
        <end position="824"/>
    </location>
</feature>
<feature type="disulfide bond" evidence="6">
    <location>
        <begin position="641"/>
        <end position="653"/>
    </location>
</feature>
<feature type="disulfide bond" evidence="6">
    <location>
        <begin position="699"/>
        <end position="712"/>
    </location>
</feature>
<feature type="disulfide bond" evidence="6">
    <location>
        <begin position="758"/>
        <end position="767"/>
    </location>
</feature>
<feature type="disulfide bond" evidence="6">
    <location>
        <begin position="807"/>
        <end position="817"/>
    </location>
</feature>
<feature type="disulfide bond" evidence="6">
    <location>
        <begin position="931"/>
        <end position="934"/>
    </location>
</feature>
<feature type="disulfide bond" evidence="6">
    <location>
        <begin position="950"/>
        <end position="983"/>
    </location>
</feature>
<feature type="sequence variant">
    <original>T</original>
    <variation>S</variation>
    <location>
        <position position="87"/>
    </location>
</feature>
<feature type="sequence variant">
    <original>E</original>
    <variation>Q</variation>
    <location>
        <position position="163"/>
    </location>
</feature>
<feature type="sequence variant">
    <original>C</original>
    <variation>R</variation>
    <location>
        <position position="319"/>
    </location>
</feature>
<feature type="sequence variant">
    <original>D</original>
    <variation>A</variation>
    <location>
        <position position="395"/>
    </location>
</feature>
<feature type="sequence variant">
    <original>L</original>
    <variation>S</variation>
    <location>
        <position position="545"/>
    </location>
</feature>
<feature type="sequence variant">
    <original>K</original>
    <variation>R</variation>
    <location>
        <position position="613"/>
    </location>
</feature>
<feature type="sequence variant">
    <original>S</original>
    <variation>A</variation>
    <location>
        <position position="825"/>
    </location>
</feature>
<feature type="sequence variant">
    <original>L</original>
    <variation>V</variation>
    <location>
        <position position="959"/>
    </location>
</feature>
<feature type="sequence variant">
    <original>T</original>
    <variation>S</variation>
    <location>
        <position position="991"/>
    </location>
</feature>
<feature type="sequence variant">
    <original>I</original>
    <variation>T</variation>
    <location>
        <position position="1037"/>
    </location>
</feature>
<comment type="function">
    <molecule>Capsid protein</molecule>
    <text evidence="2">Capsid protein interacts with genomic RNA and assembles into icosahedric core particles 65-70 nm in diameter. The resulting nucleocapsid eventually associates with the cytoplasmic domain of E2 at the cell membrane, leading to budding and formation of mature virions from host Golgi membranes. Phosphorylation negatively regulates RNA-binding activity, possibly delaying virion assembly during the viral replication phase. Capsid protein dimerizes and becomes disulfide-linked in the virion. Modulates genomic RNA replication. Modulates subgenomic RNA synthesis by interacting with human C1QBP/SF2P32. Induces both perinuclear clustering of mitochondria and the formation of electron-dense intermitochondrial plaques, both hallmarks of rubella virus infected cells. Induces apoptosis when expressed in transfected cells.</text>
</comment>
<comment type="function">
    <molecule>Spike glycoprotein E2</molecule>
    <text evidence="2">Responsible for viral attachment to target host cell, by binding to the cell receptor. Its transport to the plasma membrane depends on interaction with E1 protein. The surface glycoproteins display an irregular helical organization and a pseudo-tetrameric inner nucleocapsid arrangement.</text>
</comment>
<comment type="function">
    <molecule>Spike glycoprotein E1</molecule>
    <text evidence="2 5">Class II viral fusion protein (By similarity). Fusion activity is inactive as long as E1 is bound to E2 in mature virion. After virus attachment to target cell and clathrin-mediated endocytosis, acidification of the endosome would induce dissociation of E1/E2 heterodimer and concomitant trimerization of the E1 subunits (PubMed:15557740). This E1 homotrimer is fusion active, and promotes release of viral nucleocapsid in cytoplasm after endosome and viral membrane fusion. The cytoplasmic tail of spike glycoprotein E1 modulates virus release. The surface glycoproteins display an irregular helical organization and a pseudo-tetrameric inner nucleocapsid arrangement (By similarity).</text>
</comment>
<comment type="subunit">
    <molecule>Capsid protein</molecule>
    <text evidence="2">Homodimer; further assembles into homooligomer. Interacts with human C1QBP. Interacts (via N-terminus) with protease/methyltransferase p150.</text>
</comment>
<comment type="subunit">
    <molecule>Spike glycoprotein E1</molecule>
    <text evidence="2">Heterodimer with spike glycoprotein E2.</text>
</comment>
<comment type="subunit">
    <molecule>Spike glycoprotein E2</molecule>
    <text evidence="2">Heterodimer with spike glycoprotein E1.</text>
</comment>
<comment type="interaction">
    <interactant intactId="EBI-6377932">
        <id>PRO_0000041308</id>
    </interactant>
    <interactant intactId="EBI-347528">
        <id>Q07021</id>
        <label>C1QBP</label>
    </interactant>
    <organismsDiffer>true</organismsDiffer>
    <experiments>3</experiments>
</comment>
<comment type="interaction">
    <interactant intactId="EBI-6377932">
        <id>PRO_0000041308</id>
    </interactant>
    <interactant intactId="EBI-6375765">
        <id>Q9MZE0</id>
        <label>C1QBP</label>
    </interactant>
    <organismsDiffer>true</organismsDiffer>
    <experiments>3</experiments>
</comment>
<comment type="subcellular location">
    <molecule>Capsid protein</molecule>
    <subcellularLocation>
        <location evidence="2">Virion</location>
    </subcellularLocation>
    <subcellularLocation>
        <location>Host cytoplasm</location>
    </subcellularLocation>
    <subcellularLocation>
        <location evidence="2">Host mitochondrion</location>
    </subcellularLocation>
    <text evidence="2">The capsid protein is concentrated around Golgi region (By similarity). In the virion, it is probably associated to the viral membrane (By similarity).</text>
</comment>
<comment type="subcellular location">
    <molecule>Spike glycoprotein E2</molecule>
    <subcellularLocation>
        <location evidence="2">Virion membrane</location>
        <topology evidence="2">Single-pass type I membrane protein</topology>
    </subcellularLocation>
    <subcellularLocation>
        <location evidence="2">Host Golgi apparatus membrane</location>
        <topology evidence="2">Single-pass type I membrane protein</topology>
    </subcellularLocation>
    <text evidence="2">E1 and E2 form heterodimer in the endoplasmic reticulum before they are transported to and retained in the Golgi complex, where virus assembly occurs. E1 possesses an endoplasmic reticulum retention signal, and unassembled E2 and E1 subunits are retained in the endoplasmic reticulum. Presumably, assembly of E2 and E1 would mask the signal, thereby allowing transport of the heterodimer to the Golgi complex.</text>
</comment>
<comment type="subcellular location">
    <molecule>Spike glycoprotein E1</molecule>
    <subcellularLocation>
        <location evidence="2">Virion membrane</location>
        <topology evidence="2">Single-pass type I membrane protein</topology>
    </subcellularLocation>
    <subcellularLocation>
        <location evidence="2">Host Golgi apparatus membrane</location>
        <topology evidence="2">Single-pass type I membrane protein</topology>
    </subcellularLocation>
    <text evidence="2">E1 and E2 form heterodimer in the endoplasmic reticulum before they are transported to and retained in the Golgi complex, where virus assembly occurs. E1 possesses an endoplasmic reticulum retention signal, and unassembled E2 and E1 subunits are retained in the endoplasmic reticulum. Presumably, assembly of E2 and E1 would mask the signal, thereby allowing transport of the heterodimer to the Golgi complex.</text>
</comment>
<comment type="domain">
    <text evidence="2">Structural polyprotein: Contains two internal signal peptides that are necessary for directing translocation of the glycoproteins into the lumen of the endoplasmic reticulum.</text>
</comment>
<comment type="domain">
    <molecule>Capsid protein</molecule>
    <text evidence="2">The capsid protein is probably attached to the viral membrane through the E2 signal peptide. This domain is also required for the localization of the capsid protein to the juxtanuclear region and subsequent virus assembly at the Golgi complex.</text>
</comment>
<comment type="PTM">
    <text evidence="2">Structural polyprotein: Specific enzymatic cleavages in vivo yield mature proteins. Two signal peptidase-mediated cleavages within the polyprotein produce the structural proteins capsid, E2, and E1. The E2 signal peptide remains attached to the C-terminus of the capsid protein after cleavage by the signal peptidase. Another signal peptide at E2 C-terminus directs E1 to the ER, with a similar mechanism.</text>
</comment>
<comment type="PTM">
    <molecule>Spike glycoprotein E1</molecule>
    <text evidence="2">Contains three N-linked oligosaccharides.</text>
</comment>
<comment type="PTM">
    <text evidence="1 2">Capsid is phosphorylated on Ser-46 by host. This phosphorylation negatively regulates capsid protein RNA-binding activity (By similarity). Dephosphorylated by human PP1A (By similarity).</text>
</comment>
<comment type="miscellaneous">
    <text evidence="2">Structural polyprotein: Translated from a subgenomic RNA synthesized during togaviruses replication.</text>
</comment>
<organism>
    <name type="scientific">Rubella virus (strain Therien)</name>
    <name type="common">RUBV</name>
    <dbReference type="NCBI Taxonomy" id="11045"/>
    <lineage>
        <taxon>Viruses</taxon>
        <taxon>Riboviria</taxon>
        <taxon>Orthornavirae</taxon>
        <taxon>Kitrinoviricota</taxon>
        <taxon>Alsuviricetes</taxon>
        <taxon>Hepelivirales</taxon>
        <taxon>Matonaviridae</taxon>
        <taxon>Rubivirus</taxon>
        <taxon>Rubivirus rubellae</taxon>
    </lineage>
</organism>
<protein>
    <recommendedName>
        <fullName>Structural polyprotein</fullName>
    </recommendedName>
    <alternativeName>
        <fullName>p110</fullName>
    </alternativeName>
    <component>
        <recommendedName>
            <fullName>Capsid protein</fullName>
        </recommendedName>
        <alternativeName>
            <fullName>Coat protein</fullName>
            <shortName>C</shortName>
        </alternativeName>
    </component>
    <component>
        <recommendedName>
            <fullName>Spike glycoprotein E2</fullName>
        </recommendedName>
        <alternativeName>
            <fullName>E2 envelope glycoprotein</fullName>
        </alternativeName>
    </component>
    <component>
        <recommendedName>
            <fullName>Spike glycoprotein E1</fullName>
        </recommendedName>
        <alternativeName>
            <fullName>E1 envelope glycoprotein</fullName>
        </alternativeName>
    </component>
</protein>
<evidence type="ECO:0000250" key="1"/>
<evidence type="ECO:0000250" key="2">
    <source>
        <dbReference type="UniProtKB" id="P08563"/>
    </source>
</evidence>
<evidence type="ECO:0000255" key="3"/>
<evidence type="ECO:0000256" key="4">
    <source>
        <dbReference type="SAM" id="MobiDB-lite"/>
    </source>
</evidence>
<evidence type="ECO:0000269" key="5">
    <source>
    </source>
</evidence>
<evidence type="ECO:0000269" key="6">
    <source>
    </source>
</evidence>
<sequence>MASTTPITMEDLQKALEAQSRALRAELAAGASQSRRPRPPRQRDSSTSGDDSGRDSGGPRRRRGNRGRGQRRDWSRAPPPPEERQETRSQTPAPKPSRAPPQQPQPPRMQTGRGGSAPRPELGPPTNPFQAAVARGLRPPLHDPDTEAPTEACVTSWLWSEGEGAVFYRVDLHFTNLGTPPLDEDGRWDPALMYNPCGPEPPAHVVRAYNQPAGDVRGVWGKGERTYAEQDFRVGGTRWHRLLRMPVRGLDGDSAPLPPHTTERIETRSARHPWRIRFGAPQAFLAGLLLATVAVGTARAGLQPRADMAAPPTLPQPPCAHGQHYGHHHHQLPFLGHDGHHGGTLRVGQHYRNASDVLPGHWLQGGWGCYNLSDWHQGTHVCHTKHMDFWCVEHDRPPPATPTPLTTAANSTTAATPATAPAPCHAGLNDSCGGFLSGCGPMRLRHGADTRCGRLICGLSTTAQYPPTRFGCAMRWGLPPWELVVLTARPEDGWTCRGVPAHPGARCPELVSPMGRATCSPASALWLATANALSLDHALAAFVLLVPWVLIFMVCRRACRRRGAAAALTAVVLQGYNPPAYGEEAFTYLCTAPGCATQAPVPVRLAGVRFESKIVDGGCFAPWDLEATGACICEIPTDVSCEGLGAWVPAAPCARIWNGTQRACTFWAVNAYSSGGYAQLASYFNPGGSYYKQYHPTACEVEPAFGHSDAACWGFPTDTVMSVFALASYVQHPHKTVRVKFHTETRTVWQLSVAGVSCNVTTEHPFCNTPHGQLEVQVPPDPGDLVEYIMNYTGNQQSRWGLGSPNCHGPDWASPVCQRHSPDCSRLVGATPERPRLRLVDADDPLLRTAPGPGEVWVTPVIGSQARKCGLHIRAGPYGHATVEMPEWIHAHTTSDPWHPPGPLGLKFKTVRPVALPRTLAPPRNVRVTGCYQCGTPALVEGLAPGGGNCHLTVNGEDLGAVPPGKFVTAALLNTPPPYQVSCGGESDRATARVIDPAAQSFTGVVYGTHTTAVSETRQTWAEWAAAHWWQLTLGAICALPLAGLLACCAKCLYYLRGAIAPR</sequence>
<organismHost>
    <name type="scientific">Homo sapiens</name>
    <name type="common">Human</name>
    <dbReference type="NCBI Taxonomy" id="9606"/>
</organismHost>